<accession>Q7VQM8</accession>
<feature type="chain" id="PRO_0000155470" description="Ribosomal RNA large subunit methyltransferase E">
    <location>
        <begin position="1"/>
        <end position="206"/>
    </location>
</feature>
<feature type="active site" description="Proton acceptor" evidence="1">
    <location>
        <position position="156"/>
    </location>
</feature>
<feature type="binding site" evidence="1">
    <location>
        <position position="55"/>
    </location>
    <ligand>
        <name>S-adenosyl-L-methionine</name>
        <dbReference type="ChEBI" id="CHEBI:59789"/>
    </ligand>
</feature>
<feature type="binding site" evidence="1">
    <location>
        <position position="57"/>
    </location>
    <ligand>
        <name>S-adenosyl-L-methionine</name>
        <dbReference type="ChEBI" id="CHEBI:59789"/>
    </ligand>
</feature>
<feature type="binding site" evidence="1">
    <location>
        <position position="75"/>
    </location>
    <ligand>
        <name>S-adenosyl-L-methionine</name>
        <dbReference type="ChEBI" id="CHEBI:59789"/>
    </ligand>
</feature>
<feature type="binding site" evidence="1">
    <location>
        <position position="91"/>
    </location>
    <ligand>
        <name>S-adenosyl-L-methionine</name>
        <dbReference type="ChEBI" id="CHEBI:59789"/>
    </ligand>
</feature>
<feature type="binding site" evidence="1">
    <location>
        <position position="116"/>
    </location>
    <ligand>
        <name>S-adenosyl-L-methionine</name>
        <dbReference type="ChEBI" id="CHEBI:59789"/>
    </ligand>
</feature>
<evidence type="ECO:0000255" key="1">
    <source>
        <dbReference type="HAMAP-Rule" id="MF_01547"/>
    </source>
</evidence>
<keyword id="KW-0963">Cytoplasm</keyword>
<keyword id="KW-0489">Methyltransferase</keyword>
<keyword id="KW-1185">Reference proteome</keyword>
<keyword id="KW-0698">rRNA processing</keyword>
<keyword id="KW-0949">S-adenosyl-L-methionine</keyword>
<keyword id="KW-0808">Transferase</keyword>
<sequence length="206" mass="23449">MFIKVNTKYFIDQYALQAQNQKLRSRSWFKLQSIDRLDKLLKQGMTVIDLGSTPGGWSSYVIKQISNLGTIVSCDILPMKKIAGVKFLQGDCSNINFLNEIDLKIKHKRAQVVLSDMSPNTTGISTVDVCKSIYLGKIALNMCCRFLAPGGSFLVKIFQGDGFDQYLYNLKCLFHKVKVRKPSSSRSHSREVYIVSKDFKYKRINI</sequence>
<name>RLME_BLOFL</name>
<protein>
    <recommendedName>
        <fullName evidence="1">Ribosomal RNA large subunit methyltransferase E</fullName>
        <ecNumber evidence="1">2.1.1.166</ecNumber>
    </recommendedName>
    <alternativeName>
        <fullName evidence="1">23S rRNA Um2552 methyltransferase</fullName>
    </alternativeName>
    <alternativeName>
        <fullName evidence="1">rRNA (uridine-2'-O-)-methyltransferase</fullName>
    </alternativeName>
</protein>
<reference key="1">
    <citation type="journal article" date="2003" name="Proc. Natl. Acad. Sci. U.S.A.">
        <title>The genome sequence of Blochmannia floridanus: comparative analysis of reduced genomes.</title>
        <authorList>
            <person name="Gil R."/>
            <person name="Silva F.J."/>
            <person name="Zientz E."/>
            <person name="Delmotte F."/>
            <person name="Gonzalez-Candelas F."/>
            <person name="Latorre A."/>
            <person name="Rausell C."/>
            <person name="Kamerbeek J."/>
            <person name="Gadau J."/>
            <person name="Hoelldobler B."/>
            <person name="van Ham R.C.H.J."/>
            <person name="Gross R."/>
            <person name="Moya A."/>
        </authorList>
    </citation>
    <scope>NUCLEOTIDE SEQUENCE [LARGE SCALE GENOMIC DNA]</scope>
</reference>
<dbReference type="EC" id="2.1.1.166" evidence="1"/>
<dbReference type="EMBL" id="BX248583">
    <property type="protein sequence ID" value="CAD83620.1"/>
    <property type="molecule type" value="Genomic_DNA"/>
</dbReference>
<dbReference type="SMR" id="Q7VQM8"/>
<dbReference type="STRING" id="203907.Bfl097"/>
<dbReference type="KEGG" id="bfl:Bfl097"/>
<dbReference type="eggNOG" id="COG0293">
    <property type="taxonomic scope" value="Bacteria"/>
</dbReference>
<dbReference type="HOGENOM" id="CLU_009422_4_0_6"/>
<dbReference type="OrthoDB" id="9790080at2"/>
<dbReference type="Proteomes" id="UP000002192">
    <property type="component" value="Chromosome"/>
</dbReference>
<dbReference type="GO" id="GO:0005737">
    <property type="term" value="C:cytoplasm"/>
    <property type="evidence" value="ECO:0007669"/>
    <property type="project" value="UniProtKB-SubCell"/>
</dbReference>
<dbReference type="GO" id="GO:0008650">
    <property type="term" value="F:rRNA (uridine-2'-O-)-methyltransferase activity"/>
    <property type="evidence" value="ECO:0007669"/>
    <property type="project" value="UniProtKB-UniRule"/>
</dbReference>
<dbReference type="FunFam" id="3.40.50.150:FF:000005">
    <property type="entry name" value="Ribosomal RNA large subunit methyltransferase E"/>
    <property type="match status" value="1"/>
</dbReference>
<dbReference type="Gene3D" id="3.40.50.150">
    <property type="entry name" value="Vaccinia Virus protein VP39"/>
    <property type="match status" value="1"/>
</dbReference>
<dbReference type="HAMAP" id="MF_01547">
    <property type="entry name" value="RNA_methyltr_E"/>
    <property type="match status" value="1"/>
</dbReference>
<dbReference type="InterPro" id="IPR050082">
    <property type="entry name" value="RNA_methyltr_RlmE"/>
</dbReference>
<dbReference type="InterPro" id="IPR002877">
    <property type="entry name" value="RNA_MeTrfase_FtsJ_dom"/>
</dbReference>
<dbReference type="InterPro" id="IPR015507">
    <property type="entry name" value="rRNA-MeTfrase_E"/>
</dbReference>
<dbReference type="InterPro" id="IPR029063">
    <property type="entry name" value="SAM-dependent_MTases_sf"/>
</dbReference>
<dbReference type="PANTHER" id="PTHR10920">
    <property type="entry name" value="RIBOSOMAL RNA METHYLTRANSFERASE"/>
    <property type="match status" value="1"/>
</dbReference>
<dbReference type="PANTHER" id="PTHR10920:SF18">
    <property type="entry name" value="RRNA METHYLTRANSFERASE 2, MITOCHONDRIAL"/>
    <property type="match status" value="1"/>
</dbReference>
<dbReference type="Pfam" id="PF01728">
    <property type="entry name" value="FtsJ"/>
    <property type="match status" value="1"/>
</dbReference>
<dbReference type="PIRSF" id="PIRSF005461">
    <property type="entry name" value="23S_rRNA_mtase"/>
    <property type="match status" value="1"/>
</dbReference>
<dbReference type="SUPFAM" id="SSF53335">
    <property type="entry name" value="S-adenosyl-L-methionine-dependent methyltransferases"/>
    <property type="match status" value="1"/>
</dbReference>
<gene>
    <name evidence="1" type="primary">rlmE</name>
    <name evidence="1" type="synonym">ftsJ</name>
    <name evidence="1" type="synonym">rrmJ</name>
    <name type="ordered locus">Bfl097</name>
</gene>
<proteinExistence type="inferred from homology"/>
<comment type="function">
    <text evidence="1">Specifically methylates the uridine in position 2552 of 23S rRNA at the 2'-O position of the ribose in the fully assembled 50S ribosomal subunit.</text>
</comment>
<comment type="catalytic activity">
    <reaction evidence="1">
        <text>uridine(2552) in 23S rRNA + S-adenosyl-L-methionine = 2'-O-methyluridine(2552) in 23S rRNA + S-adenosyl-L-homocysteine + H(+)</text>
        <dbReference type="Rhea" id="RHEA:42720"/>
        <dbReference type="Rhea" id="RHEA-COMP:10202"/>
        <dbReference type="Rhea" id="RHEA-COMP:10203"/>
        <dbReference type="ChEBI" id="CHEBI:15378"/>
        <dbReference type="ChEBI" id="CHEBI:57856"/>
        <dbReference type="ChEBI" id="CHEBI:59789"/>
        <dbReference type="ChEBI" id="CHEBI:65315"/>
        <dbReference type="ChEBI" id="CHEBI:74478"/>
        <dbReference type="EC" id="2.1.1.166"/>
    </reaction>
</comment>
<comment type="subcellular location">
    <subcellularLocation>
        <location evidence="1">Cytoplasm</location>
    </subcellularLocation>
</comment>
<comment type="similarity">
    <text evidence="1">Belongs to the class I-like SAM-binding methyltransferase superfamily. RNA methyltransferase RlmE family.</text>
</comment>
<organism>
    <name type="scientific">Blochmanniella floridana</name>
    <dbReference type="NCBI Taxonomy" id="203907"/>
    <lineage>
        <taxon>Bacteria</taxon>
        <taxon>Pseudomonadati</taxon>
        <taxon>Pseudomonadota</taxon>
        <taxon>Gammaproteobacteria</taxon>
        <taxon>Enterobacterales</taxon>
        <taxon>Enterobacteriaceae</taxon>
        <taxon>ant endosymbionts</taxon>
        <taxon>Candidatus Blochmanniella</taxon>
    </lineage>
</organism>